<reference key="1">
    <citation type="journal article" date="1993" name="Mol. Microbiol.">
        <title>DNA sequence, structure and gene expression of mycobacteriophage L5: a phage system for mycobacterial genetics.</title>
        <authorList>
            <person name="Hatfull G.F."/>
            <person name="Sarkis G.J."/>
        </authorList>
    </citation>
    <scope>NUCLEOTIDE SEQUENCE [LARGE SCALE GENOMIC DNA]</scope>
</reference>
<proteinExistence type="inferred from homology"/>
<evidence type="ECO:0000250" key="1">
    <source>
        <dbReference type="UniProtKB" id="Q9WYT0"/>
    </source>
</evidence>
<evidence type="ECO:0000255" key="2">
    <source>
        <dbReference type="PROSITE-ProRule" id="PRU00661"/>
    </source>
</evidence>
<evidence type="ECO:0000305" key="3"/>
<organism>
    <name type="scientific">Mycobacterium phage L5</name>
    <name type="common">Mycobacteriophage L5</name>
    <dbReference type="NCBI Taxonomy" id="31757"/>
    <lineage>
        <taxon>Viruses</taxon>
        <taxon>Duplodnaviria</taxon>
        <taxon>Heunggongvirae</taxon>
        <taxon>Uroviricota</taxon>
        <taxon>Caudoviricetes</taxon>
        <taxon>Fromanvirus</taxon>
    </lineage>
</organism>
<gene>
    <name type="primary">48</name>
</gene>
<organismHost>
    <name type="scientific">Mycobacterium</name>
    <dbReference type="NCBI Taxonomy" id="1763"/>
</organismHost>
<name>THYX_BPML5</name>
<keyword id="KW-0274">FAD</keyword>
<keyword id="KW-0285">Flavoprotein</keyword>
<keyword id="KW-0489">Methyltransferase</keyword>
<keyword id="KW-0521">NADP</keyword>
<keyword id="KW-0545">Nucleotide biosynthesis</keyword>
<keyword id="KW-1185">Reference proteome</keyword>
<keyword id="KW-0808">Transferase</keyword>
<dbReference type="EC" id="2.1.1.148" evidence="1"/>
<dbReference type="EMBL" id="Z18946">
    <property type="protein sequence ID" value="CAA79424.1"/>
    <property type="molecule type" value="Genomic_DNA"/>
</dbReference>
<dbReference type="PIR" id="S30993">
    <property type="entry name" value="S30993"/>
</dbReference>
<dbReference type="RefSeq" id="NP_039712.1">
    <property type="nucleotide sequence ID" value="NC_001335.1"/>
</dbReference>
<dbReference type="SMR" id="Q05259"/>
<dbReference type="GeneID" id="2942957"/>
<dbReference type="KEGG" id="vg:2942957"/>
<dbReference type="OrthoDB" id="6961at10239"/>
<dbReference type="UniPathway" id="UPA00575"/>
<dbReference type="Proteomes" id="UP000002123">
    <property type="component" value="Genome"/>
</dbReference>
<dbReference type="GO" id="GO:0050660">
    <property type="term" value="F:flavin adenine dinucleotide binding"/>
    <property type="evidence" value="ECO:0007669"/>
    <property type="project" value="InterPro"/>
</dbReference>
<dbReference type="GO" id="GO:0070402">
    <property type="term" value="F:NADPH binding"/>
    <property type="evidence" value="ECO:0007669"/>
    <property type="project" value="TreeGrafter"/>
</dbReference>
<dbReference type="GO" id="GO:0050797">
    <property type="term" value="F:thymidylate synthase (FAD) activity"/>
    <property type="evidence" value="ECO:0007669"/>
    <property type="project" value="UniProtKB-EC"/>
</dbReference>
<dbReference type="GO" id="GO:0004799">
    <property type="term" value="F:thymidylate synthase activity"/>
    <property type="evidence" value="ECO:0007669"/>
    <property type="project" value="TreeGrafter"/>
</dbReference>
<dbReference type="GO" id="GO:0006231">
    <property type="term" value="P:dTMP biosynthetic process"/>
    <property type="evidence" value="ECO:0007669"/>
    <property type="project" value="InterPro"/>
</dbReference>
<dbReference type="GO" id="GO:0006235">
    <property type="term" value="P:dTTP biosynthetic process"/>
    <property type="evidence" value="ECO:0007669"/>
    <property type="project" value="UniProtKB-UniPathway"/>
</dbReference>
<dbReference type="GO" id="GO:0032259">
    <property type="term" value="P:methylation"/>
    <property type="evidence" value="ECO:0007669"/>
    <property type="project" value="UniProtKB-KW"/>
</dbReference>
<dbReference type="CDD" id="cd20175">
    <property type="entry name" value="ThyX"/>
    <property type="match status" value="1"/>
</dbReference>
<dbReference type="Gene3D" id="3.30.1360.170">
    <property type="match status" value="1"/>
</dbReference>
<dbReference type="InterPro" id="IPR003669">
    <property type="entry name" value="Thymidylate_synthase_ThyX"/>
</dbReference>
<dbReference type="InterPro" id="IPR036098">
    <property type="entry name" value="Thymidylate_synthase_ThyX_sf"/>
</dbReference>
<dbReference type="NCBIfam" id="TIGR02170">
    <property type="entry name" value="thyX"/>
    <property type="match status" value="1"/>
</dbReference>
<dbReference type="PANTHER" id="PTHR34934">
    <property type="entry name" value="FLAVIN-DEPENDENT THYMIDYLATE SYNTHASE"/>
    <property type="match status" value="1"/>
</dbReference>
<dbReference type="PANTHER" id="PTHR34934:SF1">
    <property type="entry name" value="FLAVIN-DEPENDENT THYMIDYLATE SYNTHASE"/>
    <property type="match status" value="1"/>
</dbReference>
<dbReference type="Pfam" id="PF02511">
    <property type="entry name" value="Thy1"/>
    <property type="match status" value="1"/>
</dbReference>
<dbReference type="SUPFAM" id="SSF69796">
    <property type="entry name" value="Thymidylate synthase-complementing protein Thy1"/>
    <property type="match status" value="1"/>
</dbReference>
<dbReference type="PROSITE" id="PS51331">
    <property type="entry name" value="THYX"/>
    <property type="match status" value="1"/>
</dbReference>
<comment type="function">
    <text evidence="1">Catalyzes the reductive methylation of 2'-deoxyuridine-5'-monophosphate (dUMP) to 2'-deoxythymidine-5'-monophosphate (dTMP) while utilizing 5,10-methylenetetrahydrofolate (mTHF) as the methyl donor, and NADPH and FADH(2) as the reductant.</text>
</comment>
<comment type="catalytic activity">
    <reaction evidence="1">
        <text>dUMP + (6R)-5,10-methylene-5,6,7,8-tetrahydrofolate + NADPH + H(+) = dTMP + (6S)-5,6,7,8-tetrahydrofolate + NADP(+)</text>
        <dbReference type="Rhea" id="RHEA:29043"/>
        <dbReference type="ChEBI" id="CHEBI:15378"/>
        <dbReference type="ChEBI" id="CHEBI:15636"/>
        <dbReference type="ChEBI" id="CHEBI:57453"/>
        <dbReference type="ChEBI" id="CHEBI:57783"/>
        <dbReference type="ChEBI" id="CHEBI:58349"/>
        <dbReference type="ChEBI" id="CHEBI:63528"/>
        <dbReference type="ChEBI" id="CHEBI:246422"/>
        <dbReference type="EC" id="2.1.1.148"/>
    </reaction>
</comment>
<comment type="cofactor">
    <cofactor evidence="1">
        <name>FAD</name>
        <dbReference type="ChEBI" id="CHEBI:57692"/>
    </cofactor>
    <text evidence="1">Binds 4 FAD per tetramer. Each FAD binding site is formed by three monomers.</text>
</comment>
<comment type="pathway">
    <text evidence="1">Pyrimidine metabolism; dTTP biosynthesis.</text>
</comment>
<comment type="subunit">
    <text evidence="1">Homotetramer.</text>
</comment>
<comment type="similarity">
    <text evidence="3">Belongs to the thymidylate synthase ThyX family.</text>
</comment>
<feature type="chain" id="PRO_0000175601" description="Probable flavin-dependent thymidylate synthase">
    <location>
        <begin position="1"/>
        <end position="243"/>
    </location>
</feature>
<feature type="domain" description="ThyX" evidence="2">
    <location>
        <begin position="21"/>
        <end position="239"/>
    </location>
</feature>
<feature type="short sequence motif" description="ThyX motif" evidence="2">
    <location>
        <begin position="103"/>
        <end position="113"/>
    </location>
</feature>
<feature type="active site" description="Involved in ionization of N3 of dUMP, leading to its activation" evidence="1">
    <location>
        <position position="205"/>
    </location>
</feature>
<feature type="binding site" evidence="1">
    <location>
        <position position="80"/>
    </location>
    <ligand>
        <name>FAD</name>
        <dbReference type="ChEBI" id="CHEBI:57692"/>
        <note>ligand shared between neighboring subunits</note>
    </ligand>
</feature>
<feature type="binding site" evidence="1">
    <location>
        <begin position="100"/>
        <end position="103"/>
    </location>
    <ligand>
        <name>dUMP</name>
        <dbReference type="ChEBI" id="CHEBI:246422"/>
        <note>ligand shared between dimeric partners</note>
    </ligand>
</feature>
<feature type="binding site" evidence="1">
    <location>
        <begin position="103"/>
        <end position="105"/>
    </location>
    <ligand>
        <name>FAD</name>
        <dbReference type="ChEBI" id="CHEBI:57692"/>
        <note>ligand shared between neighboring subunits</note>
    </ligand>
</feature>
<feature type="binding site" description="in other chain" evidence="1">
    <location>
        <begin position="113"/>
        <end position="115"/>
    </location>
    <ligand>
        <name>dUMP</name>
        <dbReference type="ChEBI" id="CHEBI:246422"/>
        <note>ligand shared between dimeric partners</note>
    </ligand>
</feature>
<feature type="binding site" description="in other chain" evidence="1">
    <location>
        <position position="178"/>
    </location>
    <ligand>
        <name>dUMP</name>
        <dbReference type="ChEBI" id="CHEBI:246422"/>
        <note>ligand shared between dimeric partners</note>
    </ligand>
</feature>
<feature type="binding site" evidence="1">
    <location>
        <begin position="194"/>
        <end position="196"/>
    </location>
    <ligand>
        <name>FAD</name>
        <dbReference type="ChEBI" id="CHEBI:57692"/>
        <note>ligand shared between neighboring subunits</note>
    </ligand>
</feature>
<feature type="binding site" evidence="1">
    <location>
        <position position="205"/>
    </location>
    <ligand>
        <name>dUMP</name>
        <dbReference type="ChEBI" id="CHEBI:246422"/>
        <note>ligand shared between dimeric partners</note>
    </ligand>
</feature>
<protein>
    <recommendedName>
        <fullName evidence="1">Probable flavin-dependent thymidylate synthase</fullName>
        <shortName evidence="1">FDTS</shortName>
        <ecNumber evidence="1">2.1.1.148</ecNumber>
    </recommendedName>
    <alternativeName>
        <fullName evidence="1">FAD-dependent thymidylate synthase</fullName>
    </alternativeName>
    <alternativeName>
        <fullName>Gp48</fullName>
    </alternativeName>
</protein>
<sequence length="243" mass="27784">MKAKLIAATEIDPGALRDIGFEVDDFEESKDEDPYFGDFDADELAEFAGRNCYRSFHRPNPATAENEDYLNHIIDLGHESVFEHASATFYIEASRSVLTELERHRHLSFSVVSQRYVDPTDLGIHLPPALFKLHPDDRDDLVHIMESVSSEIDAVYEHIVNRLADRGLPRKQAREAARAVLPNMTNSPMVVTGNHRAWRYVIKARWHEAADAEIRELAGELLRQLRQIAPNTYQDIPDVPYSY</sequence>
<accession>Q05259</accession>